<organism evidence="8">
    <name type="scientific">Vespa velutina</name>
    <name type="common">Asian yellow-legged hornet</name>
    <dbReference type="NCBI Taxonomy" id="202808"/>
    <lineage>
        <taxon>Eukaryota</taxon>
        <taxon>Metazoa</taxon>
        <taxon>Ecdysozoa</taxon>
        <taxon>Arthropoda</taxon>
        <taxon>Hexapoda</taxon>
        <taxon>Insecta</taxon>
        <taxon>Pterygota</taxon>
        <taxon>Neoptera</taxon>
        <taxon>Endopterygota</taxon>
        <taxon>Hymenoptera</taxon>
        <taxon>Apocrita</taxon>
        <taxon>Aculeata</taxon>
        <taxon>Vespoidea</taxon>
        <taxon>Vespidae</taxon>
        <taxon>Vespinae</taxon>
        <taxon>Vespa</taxon>
    </lineage>
</organism>
<dbReference type="SMR" id="P0DMB9"/>
<dbReference type="Allergome" id="12286">
    <property type="allergen name" value="Vesp v 5"/>
</dbReference>
<dbReference type="Allergome" id="12323">
    <property type="allergen name" value="Vesp v 5.0101"/>
</dbReference>
<dbReference type="GO" id="GO:0005576">
    <property type="term" value="C:extracellular region"/>
    <property type="evidence" value="ECO:0007669"/>
    <property type="project" value="UniProtKB-SubCell"/>
</dbReference>
<dbReference type="CDD" id="cd05380">
    <property type="entry name" value="CAP_euk"/>
    <property type="match status" value="1"/>
</dbReference>
<dbReference type="Gene3D" id="3.40.33.10">
    <property type="entry name" value="CAP"/>
    <property type="match status" value="1"/>
</dbReference>
<dbReference type="InterPro" id="IPR018244">
    <property type="entry name" value="Allrgn_V5/Tpx1_CS"/>
</dbReference>
<dbReference type="InterPro" id="IPR014044">
    <property type="entry name" value="CAP_dom"/>
</dbReference>
<dbReference type="InterPro" id="IPR035940">
    <property type="entry name" value="CAP_sf"/>
</dbReference>
<dbReference type="InterPro" id="IPR001283">
    <property type="entry name" value="CRISP-related"/>
</dbReference>
<dbReference type="InterPro" id="IPR002413">
    <property type="entry name" value="V5_allergen-like"/>
</dbReference>
<dbReference type="PANTHER" id="PTHR10334">
    <property type="entry name" value="CYSTEINE-RICH SECRETORY PROTEIN-RELATED"/>
    <property type="match status" value="1"/>
</dbReference>
<dbReference type="Pfam" id="PF00188">
    <property type="entry name" value="CAP"/>
    <property type="match status" value="1"/>
</dbReference>
<dbReference type="PRINTS" id="PR00838">
    <property type="entry name" value="V5ALLERGEN"/>
</dbReference>
<dbReference type="PRINTS" id="PR00837">
    <property type="entry name" value="V5TPXLIKE"/>
</dbReference>
<dbReference type="SMART" id="SM00198">
    <property type="entry name" value="SCP"/>
    <property type="match status" value="1"/>
</dbReference>
<dbReference type="SUPFAM" id="SSF55797">
    <property type="entry name" value="PR-1-like"/>
    <property type="match status" value="1"/>
</dbReference>
<dbReference type="PROSITE" id="PS01009">
    <property type="entry name" value="CRISP_1"/>
    <property type="match status" value="1"/>
</dbReference>
<dbReference type="PROSITE" id="PS01010">
    <property type="entry name" value="CRISP_2"/>
    <property type="match status" value="1"/>
</dbReference>
<evidence type="ECO:0000250" key="1"/>
<evidence type="ECO:0000250" key="2">
    <source>
        <dbReference type="UniProtKB" id="P86686"/>
    </source>
</evidence>
<evidence type="ECO:0000250" key="3">
    <source>
        <dbReference type="UniProtKB" id="Q05110"/>
    </source>
</evidence>
<evidence type="ECO:0000269" key="4">
    <source>
    </source>
</evidence>
<evidence type="ECO:0000269" key="5">
    <source>
    </source>
</evidence>
<evidence type="ECO:0000269" key="6">
    <source>
    </source>
</evidence>
<evidence type="ECO:0000303" key="7">
    <source>
    </source>
</evidence>
<evidence type="ECO:0000303" key="8">
    <source>
    </source>
</evidence>
<evidence type="ECO:0000303" key="9">
    <source>
    </source>
</evidence>
<evidence type="ECO:0000305" key="10"/>
<protein>
    <recommendedName>
        <fullName evidence="10">Venom allergen 5</fullName>
    </recommendedName>
    <alternativeName>
        <fullName evidence="7">Antigen 5</fullName>
    </alternativeName>
    <allergenName evidence="9">Vesp v 5</allergenName>
</protein>
<name>VA5_VESVE</name>
<sequence length="202" mass="22718">NNYCKIKCRSGIHTLCKYGTSTKPNCGRSVVKASGLTKAEKLEILKQHNEFRQKVARGLETRGNPGPQPPAKSMNTLVWNDELAQIAQVWASQCKYGHDNCRNTAKYLVGQNIAEQSTTAASFEPVSNMVKMWSDEVKDYQYGSSKNKLNDVGHYTQMVWAKTKEIGCGNIKYIENGWHHHYLVCNYGPAGNIGNEPIYEKK</sequence>
<reference evidence="10" key="1">
    <citation type="journal article" date="2015" name="Sci. Rep.">
        <title>Deciphering the venomic transcriptome of killer-wasp Vespa velutina.</title>
        <authorList>
            <person name="Liu Z."/>
            <person name="Chen S."/>
            <person name="Zhou Y."/>
            <person name="Xie C."/>
            <person name="Zhu B."/>
            <person name="Zhu H."/>
            <person name="Liu S."/>
            <person name="Wang W."/>
            <person name="Chen H."/>
            <person name="Ji Y."/>
        </authorList>
    </citation>
    <scope>NUCLEOTIDE SEQUENCE [LARGE SCALE MRNA]</scope>
    <source>
        <tissue evidence="8">Venom gland</tissue>
    </source>
</reference>
<reference key="2">
    <citation type="journal article" date="1999" name="Toxicon">
        <title>Three toxins with phospholipase activity isolated from the yellow-legged hornet (Vespa verutina) venom.</title>
        <authorList>
            <person name="Ho C.L."/>
            <person name="Lin Y.L."/>
            <person name="Li S.F."/>
        </authorList>
    </citation>
    <scope>PROTEIN SEQUENCE OF 1-24</scope>
    <scope>FUNCTION</scope>
    <scope>MASS SPECTROMETRY</scope>
    <source>
        <tissue>Venom</tissue>
    </source>
</reference>
<reference key="3">
    <citation type="journal article" date="2020" name="PLoS ONE">
        <title>Purification and molecular characterization of phospholipase, antigen 5 and hyaluronidases from the venom of the Asian hornet (Vespa velutina).</title>
        <authorList>
            <person name="Monsalve R.I."/>
            <person name="Gutierrez R."/>
            <person name="Hoof I."/>
            <person name="Lombardero M."/>
        </authorList>
    </citation>
    <scope>PROTEIN SEQUENCE OF 1-5</scope>
    <scope>SUBCELLULAR LOCATION</scope>
    <scope>IDENTIFICATION BY MASS SPECTROMETRY</scope>
    <source>
        <tissue evidence="8">Venom</tissue>
    </source>
</reference>
<keyword id="KW-0020">Allergen</keyword>
<keyword id="KW-0903">Direct protein sequencing</keyword>
<keyword id="KW-1015">Disulfide bond</keyword>
<keyword id="KW-0971">Glycation</keyword>
<keyword id="KW-0325">Glycoprotein</keyword>
<keyword id="KW-0597">Phosphoprotein</keyword>
<keyword id="KW-0964">Secreted</keyword>
<comment type="function">
    <text evidence="4">Does not show toxicity when intravenously injected into mice tail.</text>
</comment>
<comment type="subcellular location">
    <subcellularLocation>
        <location evidence="6">Secreted</location>
    </subcellularLocation>
</comment>
<comment type="tissue specificity">
    <text evidence="5">Expressed by the venom gland.</text>
</comment>
<comment type="allergen">
    <text evidence="1">Causes an allergic reaction in human.</text>
</comment>
<comment type="similarity">
    <text evidence="10">Belongs to the CRISP family.</text>
</comment>
<proteinExistence type="evidence at protein level"/>
<feature type="chain" id="PRO_0000425199" description="Venom allergen 5">
    <location>
        <begin position="1"/>
        <end position="202"/>
    </location>
</feature>
<feature type="modified residue" description="Phosphotyrosine" evidence="2">
    <location>
        <position position="107"/>
    </location>
</feature>
<feature type="glycosylation site" description="N-linked (Glc) (glycation) lysine" evidence="2">
    <location>
        <position position="138"/>
    </location>
</feature>
<feature type="disulfide bond" evidence="3">
    <location>
        <begin position="4"/>
        <end position="16"/>
    </location>
</feature>
<feature type="disulfide bond" evidence="3">
    <location>
        <begin position="8"/>
        <end position="101"/>
    </location>
</feature>
<feature type="disulfide bond" evidence="3">
    <location>
        <begin position="26"/>
        <end position="94"/>
    </location>
</feature>
<feature type="disulfide bond" evidence="3">
    <location>
        <begin position="168"/>
        <end position="185"/>
    </location>
</feature>
<feature type="sequence conflict" description="In Ref. 2; AA sequence." evidence="10" ref="2">
    <original>T</original>
    <variation>S</variation>
    <location>
        <position position="22"/>
    </location>
</feature>
<accession>P0DMB9</accession>